<protein>
    <recommendedName>
        <fullName evidence="6">Protein ABHD8</fullName>
        <ecNumber>3.-.-.-</ecNumber>
    </recommendedName>
    <alternativeName>
        <fullName evidence="6">Alpha/beta hydrolase domain-containing protein 8</fullName>
        <shortName evidence="7">Abhydrolase domain-containing protein 8</shortName>
    </alternativeName>
</protein>
<feature type="chain" id="PRO_0000281384" description="Protein ABHD8">
    <location>
        <begin position="1"/>
        <end position="439"/>
    </location>
</feature>
<feature type="domain" description="AB hydrolase-1" evidence="3">
    <location>
        <begin position="169"/>
        <end position="271"/>
    </location>
</feature>
<feature type="region of interest" description="Disordered" evidence="4">
    <location>
        <begin position="54"/>
        <end position="75"/>
    </location>
</feature>
<feature type="region of interest" description="Disordered" evidence="4">
    <location>
        <begin position="122"/>
        <end position="148"/>
    </location>
</feature>
<feature type="region of interest" description="Disordered" evidence="4">
    <location>
        <begin position="415"/>
        <end position="439"/>
    </location>
</feature>
<feature type="compositionally biased region" description="Pro residues" evidence="4">
    <location>
        <begin position="58"/>
        <end position="67"/>
    </location>
</feature>
<feature type="compositionally biased region" description="Basic residues" evidence="4">
    <location>
        <begin position="138"/>
        <end position="148"/>
    </location>
</feature>
<feature type="active site" description="Charge relay system" evidence="1">
    <location>
        <position position="244"/>
    </location>
</feature>
<feature type="active site" description="Charge relay system" evidence="1">
    <location>
        <position position="362"/>
    </location>
</feature>
<feature type="active site" description="Charge relay system" evidence="1">
    <location>
        <position position="390"/>
    </location>
</feature>
<feature type="sequence conflict" description="In Ref. 2; BAB22558." evidence="6" ref="2">
    <original>R</original>
    <variation>P</variation>
    <location>
        <position position="84"/>
    </location>
</feature>
<feature type="sequence conflict" description="In Ref. 1; BAA92755." evidence="6" ref="1">
    <original>S</original>
    <variation>F</variation>
    <location>
        <position position="248"/>
    </location>
</feature>
<comment type="function">
    <text evidence="2 5">Negatively regulates NLRP3-driven inflammation (PubMed:39225180). Promotes NLRP3 degradation through the chaperone-mediated autophagy (CMA) pathway, hence attenuating inflammasome activation and IL1B secretion. Acts by recruiting palmitoyltransferase ZDHHC12 to NLRP3, facilitating NLRP3 palmitoylation and subsequent degradation (By similarity).</text>
</comment>
<comment type="subunit">
    <text evidence="2">Interacts with NLRP3 (via NACHT and LLR domains); this interaction is enhanced in the presence of NLRP3 inflammasome inducers, such as ATP, nigericin, silica, or alum (By similarity). Interacts with ZDHHC12 (By similarity).</text>
</comment>
<comment type="subcellular location">
    <subcellularLocation>
        <location evidence="2">Cytoplasm</location>
    </subcellularLocation>
</comment>
<comment type="similarity">
    <text evidence="6">Belongs to the AB hydrolase superfamily.</text>
</comment>
<comment type="caution">
    <text evidence="6">It is uncertain whether Met-1 or Met-7 is the initiator.</text>
</comment>
<sequence>MTSEHTMLTGVTDGFFCCLLGTPPNAVRPLESVESSDGYTFVEVKPGRVLRVKHAGPAPIPTPPPPPPEDDPGVKTGLVRCQRRITVYRNGRLVVENLGRAPRADLQGRSGSGDPPAALEVELAEPAGGDTRANPGSGRRRRPRRPKRTIHIDCEQRITSCKGAQADVVLFFIHGVGGSLAIWKEQLDFFVRLGYEVVAPDLAGHGASSAPQVAAAYTFYALAEDMRAIFTRYAKKRNVLIGHSYGVSFCTFLAHEYPDLVHKVIMINGGGPTALEPSLCSIFNMPTCVLHCLSPCLAWSFLKAGFARQGAKEKQLLKEGNAFNVSSFVLRAMMSGQYWPEGDEVYHAELTVPVLLVHGMHDKFVPVEEDQRMAEILLLAFLKLIEEGSHMVMLECPETVNTLLHEFLLWEPEPEAEPKLEPKPKPQLLQPEPAPGEEK</sequence>
<keyword id="KW-0963">Cytoplasm</keyword>
<keyword id="KW-0378">Hydrolase</keyword>
<keyword id="KW-0395">Inflammatory response</keyword>
<keyword id="KW-1185">Reference proteome</keyword>
<gene>
    <name evidence="7" type="primary">Abhd8</name>
</gene>
<reference key="1">
    <citation type="journal article" date="2000" name="Biochem. Biophys. Res. Commun.">
        <title>Growth suppression of Escherichia coli by induction of expression of mammalian genes with transmembrane or ATPase domains.</title>
        <authorList>
            <person name="Inoue S."/>
            <person name="Sano H."/>
            <person name="Ohta M."/>
        </authorList>
    </citation>
    <scope>NUCLEOTIDE SEQUENCE [MRNA]</scope>
    <source>
        <tissue>Brain</tissue>
    </source>
</reference>
<reference key="2">
    <citation type="journal article" date="2005" name="Science">
        <title>The transcriptional landscape of the mammalian genome.</title>
        <authorList>
            <person name="Carninci P."/>
            <person name="Kasukawa T."/>
            <person name="Katayama S."/>
            <person name="Gough J."/>
            <person name="Frith M.C."/>
            <person name="Maeda N."/>
            <person name="Oyama R."/>
            <person name="Ravasi T."/>
            <person name="Lenhard B."/>
            <person name="Wells C."/>
            <person name="Kodzius R."/>
            <person name="Shimokawa K."/>
            <person name="Bajic V.B."/>
            <person name="Brenner S.E."/>
            <person name="Batalov S."/>
            <person name="Forrest A.R."/>
            <person name="Zavolan M."/>
            <person name="Davis M.J."/>
            <person name="Wilming L.G."/>
            <person name="Aidinis V."/>
            <person name="Allen J.E."/>
            <person name="Ambesi-Impiombato A."/>
            <person name="Apweiler R."/>
            <person name="Aturaliya R.N."/>
            <person name="Bailey T.L."/>
            <person name="Bansal M."/>
            <person name="Baxter L."/>
            <person name="Beisel K.W."/>
            <person name="Bersano T."/>
            <person name="Bono H."/>
            <person name="Chalk A.M."/>
            <person name="Chiu K.P."/>
            <person name="Choudhary V."/>
            <person name="Christoffels A."/>
            <person name="Clutterbuck D.R."/>
            <person name="Crowe M.L."/>
            <person name="Dalla E."/>
            <person name="Dalrymple B.P."/>
            <person name="de Bono B."/>
            <person name="Della Gatta G."/>
            <person name="di Bernardo D."/>
            <person name="Down T."/>
            <person name="Engstrom P."/>
            <person name="Fagiolini M."/>
            <person name="Faulkner G."/>
            <person name="Fletcher C.F."/>
            <person name="Fukushima T."/>
            <person name="Furuno M."/>
            <person name="Futaki S."/>
            <person name="Gariboldi M."/>
            <person name="Georgii-Hemming P."/>
            <person name="Gingeras T.R."/>
            <person name="Gojobori T."/>
            <person name="Green R.E."/>
            <person name="Gustincich S."/>
            <person name="Harbers M."/>
            <person name="Hayashi Y."/>
            <person name="Hensch T.K."/>
            <person name="Hirokawa N."/>
            <person name="Hill D."/>
            <person name="Huminiecki L."/>
            <person name="Iacono M."/>
            <person name="Ikeo K."/>
            <person name="Iwama A."/>
            <person name="Ishikawa T."/>
            <person name="Jakt M."/>
            <person name="Kanapin A."/>
            <person name="Katoh M."/>
            <person name="Kawasawa Y."/>
            <person name="Kelso J."/>
            <person name="Kitamura H."/>
            <person name="Kitano H."/>
            <person name="Kollias G."/>
            <person name="Krishnan S.P."/>
            <person name="Kruger A."/>
            <person name="Kummerfeld S.K."/>
            <person name="Kurochkin I.V."/>
            <person name="Lareau L.F."/>
            <person name="Lazarevic D."/>
            <person name="Lipovich L."/>
            <person name="Liu J."/>
            <person name="Liuni S."/>
            <person name="McWilliam S."/>
            <person name="Madan Babu M."/>
            <person name="Madera M."/>
            <person name="Marchionni L."/>
            <person name="Matsuda H."/>
            <person name="Matsuzawa S."/>
            <person name="Miki H."/>
            <person name="Mignone F."/>
            <person name="Miyake S."/>
            <person name="Morris K."/>
            <person name="Mottagui-Tabar S."/>
            <person name="Mulder N."/>
            <person name="Nakano N."/>
            <person name="Nakauchi H."/>
            <person name="Ng P."/>
            <person name="Nilsson R."/>
            <person name="Nishiguchi S."/>
            <person name="Nishikawa S."/>
            <person name="Nori F."/>
            <person name="Ohara O."/>
            <person name="Okazaki Y."/>
            <person name="Orlando V."/>
            <person name="Pang K.C."/>
            <person name="Pavan W.J."/>
            <person name="Pavesi G."/>
            <person name="Pesole G."/>
            <person name="Petrovsky N."/>
            <person name="Piazza S."/>
            <person name="Reed J."/>
            <person name="Reid J.F."/>
            <person name="Ring B.Z."/>
            <person name="Ringwald M."/>
            <person name="Rost B."/>
            <person name="Ruan Y."/>
            <person name="Salzberg S.L."/>
            <person name="Sandelin A."/>
            <person name="Schneider C."/>
            <person name="Schoenbach C."/>
            <person name="Sekiguchi K."/>
            <person name="Semple C.A."/>
            <person name="Seno S."/>
            <person name="Sessa L."/>
            <person name="Sheng Y."/>
            <person name="Shibata Y."/>
            <person name="Shimada H."/>
            <person name="Shimada K."/>
            <person name="Silva D."/>
            <person name="Sinclair B."/>
            <person name="Sperling S."/>
            <person name="Stupka E."/>
            <person name="Sugiura K."/>
            <person name="Sultana R."/>
            <person name="Takenaka Y."/>
            <person name="Taki K."/>
            <person name="Tammoja K."/>
            <person name="Tan S.L."/>
            <person name="Tang S."/>
            <person name="Taylor M.S."/>
            <person name="Tegner J."/>
            <person name="Teichmann S.A."/>
            <person name="Ueda H.R."/>
            <person name="van Nimwegen E."/>
            <person name="Verardo R."/>
            <person name="Wei C.L."/>
            <person name="Yagi K."/>
            <person name="Yamanishi H."/>
            <person name="Zabarovsky E."/>
            <person name="Zhu S."/>
            <person name="Zimmer A."/>
            <person name="Hide W."/>
            <person name="Bult C."/>
            <person name="Grimmond S.M."/>
            <person name="Teasdale R.D."/>
            <person name="Liu E.T."/>
            <person name="Brusic V."/>
            <person name="Quackenbush J."/>
            <person name="Wahlestedt C."/>
            <person name="Mattick J.S."/>
            <person name="Hume D.A."/>
            <person name="Kai C."/>
            <person name="Sasaki D."/>
            <person name="Tomaru Y."/>
            <person name="Fukuda S."/>
            <person name="Kanamori-Katayama M."/>
            <person name="Suzuki M."/>
            <person name="Aoki J."/>
            <person name="Arakawa T."/>
            <person name="Iida J."/>
            <person name="Imamura K."/>
            <person name="Itoh M."/>
            <person name="Kato T."/>
            <person name="Kawaji H."/>
            <person name="Kawagashira N."/>
            <person name="Kawashima T."/>
            <person name="Kojima M."/>
            <person name="Kondo S."/>
            <person name="Konno H."/>
            <person name="Nakano K."/>
            <person name="Ninomiya N."/>
            <person name="Nishio T."/>
            <person name="Okada M."/>
            <person name="Plessy C."/>
            <person name="Shibata K."/>
            <person name="Shiraki T."/>
            <person name="Suzuki S."/>
            <person name="Tagami M."/>
            <person name="Waki K."/>
            <person name="Watahiki A."/>
            <person name="Okamura-Oho Y."/>
            <person name="Suzuki H."/>
            <person name="Kawai J."/>
            <person name="Hayashizaki Y."/>
        </authorList>
    </citation>
    <scope>NUCLEOTIDE SEQUENCE [LARGE SCALE MRNA]</scope>
    <source>
        <strain>C57BL/6J</strain>
        <strain>NOD</strain>
        <tissue>Dendritic cell</tissue>
        <tissue>Spleen</tissue>
    </source>
</reference>
<reference key="3">
    <citation type="journal article" date="2004" name="Genome Res.">
        <title>The status, quality, and expansion of the NIH full-length cDNA project: the Mammalian Gene Collection (MGC).</title>
        <authorList>
            <consortium name="The MGC Project Team"/>
        </authorList>
    </citation>
    <scope>NUCLEOTIDE SEQUENCE [LARGE SCALE MRNA]</scope>
    <source>
        <strain>FVB/N</strain>
        <tissue>Liver</tissue>
    </source>
</reference>
<reference key="4">
    <citation type="journal article" date="2025" name="Autophagy">
        <title>ABHD8 antagonizes inflammation by facilitating chaperone-mediated autophagy-mediated degradation of NLRP3.</title>
        <authorList>
            <person name="Yang S."/>
            <person name="Li M."/>
            <person name="Lian G."/>
            <person name="Wu Y."/>
            <person name="Cui J."/>
            <person name="Wang L."/>
        </authorList>
    </citation>
    <scope>FUNCTION</scope>
</reference>
<accession>Q8R0P8</accession>
<accession>Q9DC79</accession>
<accession>Q9JMF5</accession>
<organism>
    <name type="scientific">Mus musculus</name>
    <name type="common">Mouse</name>
    <dbReference type="NCBI Taxonomy" id="10090"/>
    <lineage>
        <taxon>Eukaryota</taxon>
        <taxon>Metazoa</taxon>
        <taxon>Chordata</taxon>
        <taxon>Craniata</taxon>
        <taxon>Vertebrata</taxon>
        <taxon>Euteleostomi</taxon>
        <taxon>Mammalia</taxon>
        <taxon>Eutheria</taxon>
        <taxon>Euarchontoglires</taxon>
        <taxon>Glires</taxon>
        <taxon>Rodentia</taxon>
        <taxon>Myomorpha</taxon>
        <taxon>Muroidea</taxon>
        <taxon>Muridae</taxon>
        <taxon>Murinae</taxon>
        <taxon>Mus</taxon>
        <taxon>Mus</taxon>
    </lineage>
</organism>
<proteinExistence type="evidence at transcript level"/>
<evidence type="ECO:0000250" key="1"/>
<evidence type="ECO:0000250" key="2">
    <source>
        <dbReference type="UniProtKB" id="Q96I13"/>
    </source>
</evidence>
<evidence type="ECO:0000255" key="3"/>
<evidence type="ECO:0000256" key="4">
    <source>
        <dbReference type="SAM" id="MobiDB-lite"/>
    </source>
</evidence>
<evidence type="ECO:0000269" key="5">
    <source>
    </source>
</evidence>
<evidence type="ECO:0000305" key="6"/>
<evidence type="ECO:0000312" key="7">
    <source>
        <dbReference type="MGI" id="MGI:1918946"/>
    </source>
</evidence>
<name>ABHD8_MOUSE</name>
<dbReference type="EC" id="3.-.-.-"/>
<dbReference type="EMBL" id="AB030191">
    <property type="protein sequence ID" value="BAA92755.1"/>
    <property type="molecule type" value="mRNA"/>
</dbReference>
<dbReference type="EMBL" id="AK003090">
    <property type="protein sequence ID" value="BAB22558.1"/>
    <property type="molecule type" value="mRNA"/>
</dbReference>
<dbReference type="EMBL" id="AK155503">
    <property type="protein sequence ID" value="BAE33297.1"/>
    <property type="molecule type" value="mRNA"/>
</dbReference>
<dbReference type="EMBL" id="BC026540">
    <property type="protein sequence ID" value="AAH26540.1"/>
    <property type="molecule type" value="mRNA"/>
</dbReference>
<dbReference type="CCDS" id="CCDS40382.1"/>
<dbReference type="RefSeq" id="NP_071864.2">
    <property type="nucleotide sequence ID" value="NM_022419.3"/>
</dbReference>
<dbReference type="RefSeq" id="XP_030099565.1">
    <property type="nucleotide sequence ID" value="XM_030243705.1"/>
</dbReference>
<dbReference type="RefSeq" id="XP_036010119.1">
    <property type="nucleotide sequence ID" value="XM_036154226.1"/>
</dbReference>
<dbReference type="SMR" id="Q8R0P8"/>
<dbReference type="FunCoup" id="Q8R0P8">
    <property type="interactions" value="135"/>
</dbReference>
<dbReference type="IntAct" id="Q8R0P8">
    <property type="interactions" value="1"/>
</dbReference>
<dbReference type="STRING" id="10090.ENSMUSP00000008094"/>
<dbReference type="ESTHER" id="mouse-Abhd8">
    <property type="family name" value="ABHD8"/>
</dbReference>
<dbReference type="MEROPS" id="S33.011"/>
<dbReference type="GlyGen" id="Q8R0P8">
    <property type="glycosylation" value="2 sites"/>
</dbReference>
<dbReference type="iPTMnet" id="Q8R0P8"/>
<dbReference type="PhosphoSitePlus" id="Q8R0P8"/>
<dbReference type="PaxDb" id="10090-ENSMUSP00000008094"/>
<dbReference type="ProteomicsDB" id="286054"/>
<dbReference type="Antibodypedia" id="51446">
    <property type="antibodies" value="130 antibodies from 26 providers"/>
</dbReference>
<dbReference type="DNASU" id="64296"/>
<dbReference type="Ensembl" id="ENSMUST00000008094.10">
    <property type="protein sequence ID" value="ENSMUSP00000008094.9"/>
    <property type="gene ID" value="ENSMUSG00000007950.10"/>
</dbReference>
<dbReference type="GeneID" id="64296"/>
<dbReference type="KEGG" id="mmu:64296"/>
<dbReference type="UCSC" id="uc009mdf.2">
    <property type="organism name" value="mouse"/>
</dbReference>
<dbReference type="AGR" id="MGI:1918946"/>
<dbReference type="CTD" id="79575"/>
<dbReference type="MGI" id="MGI:1918946">
    <property type="gene designation" value="Abhd8"/>
</dbReference>
<dbReference type="VEuPathDB" id="HostDB:ENSMUSG00000007950"/>
<dbReference type="eggNOG" id="KOG2382">
    <property type="taxonomic scope" value="Eukaryota"/>
</dbReference>
<dbReference type="GeneTree" id="ENSGT00390000007336"/>
<dbReference type="HOGENOM" id="CLU_057347_0_0_1"/>
<dbReference type="InParanoid" id="Q8R0P8"/>
<dbReference type="OMA" id="VHCQRRI"/>
<dbReference type="OrthoDB" id="428974at2759"/>
<dbReference type="PhylomeDB" id="Q8R0P8"/>
<dbReference type="TreeFam" id="TF331708"/>
<dbReference type="BioGRID-ORCS" id="64296">
    <property type="hits" value="2 hits in 77 CRISPR screens"/>
</dbReference>
<dbReference type="ChiTaRS" id="Abhd8">
    <property type="organism name" value="mouse"/>
</dbReference>
<dbReference type="PRO" id="PR:Q8R0P8"/>
<dbReference type="Proteomes" id="UP000000589">
    <property type="component" value="Chromosome 8"/>
</dbReference>
<dbReference type="RNAct" id="Q8R0P8">
    <property type="molecule type" value="protein"/>
</dbReference>
<dbReference type="Bgee" id="ENSMUSG00000007950">
    <property type="expression patterns" value="Expressed in perirhinal cortex and 201 other cell types or tissues"/>
</dbReference>
<dbReference type="GO" id="GO:0005737">
    <property type="term" value="C:cytoplasm"/>
    <property type="evidence" value="ECO:0000250"/>
    <property type="project" value="UniProtKB"/>
</dbReference>
<dbReference type="GO" id="GO:0016787">
    <property type="term" value="F:hydrolase activity"/>
    <property type="evidence" value="ECO:0007669"/>
    <property type="project" value="UniProtKB-KW"/>
</dbReference>
<dbReference type="GO" id="GO:1900226">
    <property type="term" value="P:negative regulation of NLRP3 inflammasome complex assembly"/>
    <property type="evidence" value="ECO:0000315"/>
    <property type="project" value="UniProtKB"/>
</dbReference>
<dbReference type="FunFam" id="3.40.50.1820:FF:000017">
    <property type="entry name" value="Abhydrolase domain containing 8"/>
    <property type="match status" value="1"/>
</dbReference>
<dbReference type="Gene3D" id="3.40.50.1820">
    <property type="entry name" value="alpha/beta hydrolase"/>
    <property type="match status" value="1"/>
</dbReference>
<dbReference type="InterPro" id="IPR000073">
    <property type="entry name" value="AB_hydrolase_1"/>
</dbReference>
<dbReference type="InterPro" id="IPR029058">
    <property type="entry name" value="AB_hydrolase_fold"/>
</dbReference>
<dbReference type="InterPro" id="IPR000639">
    <property type="entry name" value="Epox_hydrolase-like"/>
</dbReference>
<dbReference type="PANTHER" id="PTHR42886:SF83">
    <property type="entry name" value="PROTEIN ABHD8"/>
    <property type="match status" value="1"/>
</dbReference>
<dbReference type="PANTHER" id="PTHR42886">
    <property type="entry name" value="RE40534P-RELATED"/>
    <property type="match status" value="1"/>
</dbReference>
<dbReference type="Pfam" id="PF00561">
    <property type="entry name" value="Abhydrolase_1"/>
    <property type="match status" value="1"/>
</dbReference>
<dbReference type="PRINTS" id="PR00111">
    <property type="entry name" value="ABHYDROLASE"/>
</dbReference>
<dbReference type="PRINTS" id="PR00412">
    <property type="entry name" value="EPOXHYDRLASE"/>
</dbReference>
<dbReference type="SUPFAM" id="SSF53474">
    <property type="entry name" value="alpha/beta-Hydrolases"/>
    <property type="match status" value="1"/>
</dbReference>